<reference key="1">
    <citation type="journal article" date="2007" name="Proc. Natl. Acad. Sci. U.S.A.">
        <title>Genome and proteome of long-chain alkane degrading Geobacillus thermodenitrificans NG80-2 isolated from a deep-subsurface oil reservoir.</title>
        <authorList>
            <person name="Feng L."/>
            <person name="Wang W."/>
            <person name="Cheng J."/>
            <person name="Ren Y."/>
            <person name="Zhao G."/>
            <person name="Gao C."/>
            <person name="Tang Y."/>
            <person name="Liu X."/>
            <person name="Han W."/>
            <person name="Peng X."/>
            <person name="Liu R."/>
            <person name="Wang L."/>
        </authorList>
    </citation>
    <scope>NUCLEOTIDE SEQUENCE [LARGE SCALE GENOMIC DNA]</scope>
    <source>
        <strain>NG80-2</strain>
    </source>
</reference>
<feature type="chain" id="PRO_0000354800" description="Catalase-peroxidase">
    <location>
        <begin position="1"/>
        <end position="735"/>
    </location>
</feature>
<feature type="region of interest" description="Disordered" evidence="2">
    <location>
        <begin position="1"/>
        <end position="29"/>
    </location>
</feature>
<feature type="compositionally biased region" description="Polar residues" evidence="2">
    <location>
        <begin position="1"/>
        <end position="26"/>
    </location>
</feature>
<feature type="active site" description="Proton acceptor" evidence="1">
    <location>
        <position position="101"/>
    </location>
</feature>
<feature type="binding site" description="axial binding residue" evidence="1">
    <location>
        <position position="264"/>
    </location>
    <ligand>
        <name>heme b</name>
        <dbReference type="ChEBI" id="CHEBI:60344"/>
    </ligand>
    <ligandPart>
        <name>Fe</name>
        <dbReference type="ChEBI" id="CHEBI:18248"/>
    </ligandPart>
</feature>
<feature type="site" description="Transition state stabilizer" evidence="1">
    <location>
        <position position="97"/>
    </location>
</feature>
<feature type="cross-link" description="Tryptophyl-tyrosyl-methioninium (Trp-Tyr) (with M-249)" evidence="1">
    <location>
        <begin position="100"/>
        <end position="223"/>
    </location>
</feature>
<feature type="cross-link" description="Tryptophyl-tyrosyl-methioninium (Tyr-Met) (with W-100)" evidence="1">
    <location>
        <begin position="223"/>
        <end position="249"/>
    </location>
</feature>
<gene>
    <name evidence="1" type="primary">katG</name>
    <name type="ordered locus">GTNG_1561</name>
</gene>
<name>KATG_GEOTN</name>
<dbReference type="EC" id="1.11.1.21" evidence="1"/>
<dbReference type="EMBL" id="CP000557">
    <property type="protein sequence ID" value="ABO66929.1"/>
    <property type="molecule type" value="Genomic_DNA"/>
</dbReference>
<dbReference type="RefSeq" id="WP_008879140.1">
    <property type="nucleotide sequence ID" value="NC_009328.1"/>
</dbReference>
<dbReference type="SMR" id="A4INM5"/>
<dbReference type="PeroxiBase" id="7319">
    <property type="entry name" value="GthCP01"/>
</dbReference>
<dbReference type="GeneID" id="87620855"/>
<dbReference type="KEGG" id="gtn:GTNG_1561"/>
<dbReference type="eggNOG" id="COG0376">
    <property type="taxonomic scope" value="Bacteria"/>
</dbReference>
<dbReference type="HOGENOM" id="CLU_025424_2_0_9"/>
<dbReference type="Proteomes" id="UP000001578">
    <property type="component" value="Chromosome"/>
</dbReference>
<dbReference type="GO" id="GO:0005829">
    <property type="term" value="C:cytosol"/>
    <property type="evidence" value="ECO:0007669"/>
    <property type="project" value="TreeGrafter"/>
</dbReference>
<dbReference type="GO" id="GO:0004096">
    <property type="term" value="F:catalase activity"/>
    <property type="evidence" value="ECO:0007669"/>
    <property type="project" value="UniProtKB-UniRule"/>
</dbReference>
<dbReference type="GO" id="GO:0020037">
    <property type="term" value="F:heme binding"/>
    <property type="evidence" value="ECO:0007669"/>
    <property type="project" value="InterPro"/>
</dbReference>
<dbReference type="GO" id="GO:0046872">
    <property type="term" value="F:metal ion binding"/>
    <property type="evidence" value="ECO:0007669"/>
    <property type="project" value="UniProtKB-KW"/>
</dbReference>
<dbReference type="GO" id="GO:0070301">
    <property type="term" value="P:cellular response to hydrogen peroxide"/>
    <property type="evidence" value="ECO:0007669"/>
    <property type="project" value="TreeGrafter"/>
</dbReference>
<dbReference type="GO" id="GO:0042744">
    <property type="term" value="P:hydrogen peroxide catabolic process"/>
    <property type="evidence" value="ECO:0007669"/>
    <property type="project" value="UniProtKB-KW"/>
</dbReference>
<dbReference type="CDD" id="cd00649">
    <property type="entry name" value="catalase_peroxidase_1"/>
    <property type="match status" value="1"/>
</dbReference>
<dbReference type="CDD" id="cd08200">
    <property type="entry name" value="catalase_peroxidase_2"/>
    <property type="match status" value="1"/>
</dbReference>
<dbReference type="FunFam" id="1.10.420.10:FF:000002">
    <property type="entry name" value="Catalase-peroxidase"/>
    <property type="match status" value="1"/>
</dbReference>
<dbReference type="FunFam" id="1.10.420.10:FF:000004">
    <property type="entry name" value="Catalase-peroxidase"/>
    <property type="match status" value="1"/>
</dbReference>
<dbReference type="FunFam" id="1.10.520.10:FF:000002">
    <property type="entry name" value="Catalase-peroxidase"/>
    <property type="match status" value="1"/>
</dbReference>
<dbReference type="Gene3D" id="1.10.520.10">
    <property type="match status" value="2"/>
</dbReference>
<dbReference type="Gene3D" id="1.10.420.10">
    <property type="entry name" value="Peroxidase, domain 2"/>
    <property type="match status" value="2"/>
</dbReference>
<dbReference type="HAMAP" id="MF_01961">
    <property type="entry name" value="Catal_peroxid"/>
    <property type="match status" value="1"/>
</dbReference>
<dbReference type="InterPro" id="IPR000763">
    <property type="entry name" value="Catalase_peroxidase"/>
</dbReference>
<dbReference type="InterPro" id="IPR002016">
    <property type="entry name" value="Haem_peroxidase"/>
</dbReference>
<dbReference type="InterPro" id="IPR010255">
    <property type="entry name" value="Haem_peroxidase_sf"/>
</dbReference>
<dbReference type="InterPro" id="IPR019794">
    <property type="entry name" value="Peroxidases_AS"/>
</dbReference>
<dbReference type="InterPro" id="IPR019793">
    <property type="entry name" value="Peroxidases_heam-ligand_BS"/>
</dbReference>
<dbReference type="NCBIfam" id="TIGR00198">
    <property type="entry name" value="cat_per_HPI"/>
    <property type="match status" value="1"/>
</dbReference>
<dbReference type="NCBIfam" id="NF011635">
    <property type="entry name" value="PRK15061.1"/>
    <property type="match status" value="1"/>
</dbReference>
<dbReference type="PANTHER" id="PTHR30555:SF6">
    <property type="entry name" value="CATALASE-PEROXIDASE"/>
    <property type="match status" value="1"/>
</dbReference>
<dbReference type="PANTHER" id="PTHR30555">
    <property type="entry name" value="HYDROPEROXIDASE I, BIFUNCTIONAL CATALASE-PEROXIDASE"/>
    <property type="match status" value="1"/>
</dbReference>
<dbReference type="Pfam" id="PF00141">
    <property type="entry name" value="peroxidase"/>
    <property type="match status" value="2"/>
</dbReference>
<dbReference type="PRINTS" id="PR00460">
    <property type="entry name" value="BPEROXIDASE"/>
</dbReference>
<dbReference type="PRINTS" id="PR00458">
    <property type="entry name" value="PEROXIDASE"/>
</dbReference>
<dbReference type="SUPFAM" id="SSF48113">
    <property type="entry name" value="Heme-dependent peroxidases"/>
    <property type="match status" value="2"/>
</dbReference>
<dbReference type="PROSITE" id="PS00435">
    <property type="entry name" value="PEROXIDASE_1"/>
    <property type="match status" value="1"/>
</dbReference>
<dbReference type="PROSITE" id="PS00436">
    <property type="entry name" value="PEROXIDASE_2"/>
    <property type="match status" value="1"/>
</dbReference>
<dbReference type="PROSITE" id="PS50873">
    <property type="entry name" value="PEROXIDASE_4"/>
    <property type="match status" value="1"/>
</dbReference>
<sequence length="735" mass="82898">MENQNRQNASQCPFHGSITNQSSNRTTNKDWWPNQLNLSILHQHDRKTNPHDEEFDYAAEFQKLDYWALKEDLRKLMTESQDWWPADYGHYGPLFIRMAWHSAGTYRIGDGRGGASTGTQRFAPLNSWPDNANLDKARRLLWPIKKKYGNKISWADLFILAGNVAIESMGGKTIGFGGGRVDVWHPEEDIYWGAEKEWLASERHSDDGELEHPLAASVMGLIYVNPEGPDGKPDPKAAARDIRETFRRMGMNDEETVALIAGGHTFGKAHGAGPATHVGPEPEAAPIEAQGLGWMSSYGKGKGSDTITSGIEGAWTPTPTQWDMSYFDMLFGYDWWLTKSPAGAWQWMAVDPNEKDLAPDAEDPSKKVPTMMMTTDLALRFDPEYEKIARRFHQNPEEFAEAFARAWFKLTHRDMGPKTRYLGPEVPKEDFIWQDPIPEVNYELTEAEIEEIKAKILNSGLTVSELVKTAWASASTFRHSDKRGGANGARIRLAPQNEWEVNEPERLAKVLSIYEDIQRELPKKVSIADLIVLGGSAAVEKAARDAGFDVKVPFSPGRGDATQEQTDVESFAVLEPFADGFRNYQKQEYSVPPEELLVDKAQLLGLTAPEMTVLVGGLRVLGANYRDLPHGVFTDRIGVLTNDFFVNLLDMDYEWVPTDSGIYEIRNRKTGEVRWTATRVDLIFGSNSILRSYAEFYAQDDNQEKFVRDFINAWVKVMNADRFDLVKKARESVTA</sequence>
<protein>
    <recommendedName>
        <fullName evidence="1">Catalase-peroxidase</fullName>
        <shortName evidence="1">CP</shortName>
        <ecNumber evidence="1">1.11.1.21</ecNumber>
    </recommendedName>
    <alternativeName>
        <fullName evidence="1">Peroxidase/catalase</fullName>
    </alternativeName>
</protein>
<keyword id="KW-0349">Heme</keyword>
<keyword id="KW-0376">Hydrogen peroxide</keyword>
<keyword id="KW-0408">Iron</keyword>
<keyword id="KW-0479">Metal-binding</keyword>
<keyword id="KW-0560">Oxidoreductase</keyword>
<keyword id="KW-0575">Peroxidase</keyword>
<comment type="function">
    <text evidence="1">Bifunctional enzyme with both catalase and broad-spectrum peroxidase activity.</text>
</comment>
<comment type="catalytic activity">
    <reaction evidence="1">
        <text>H2O2 + AH2 = A + 2 H2O</text>
        <dbReference type="Rhea" id="RHEA:30275"/>
        <dbReference type="ChEBI" id="CHEBI:13193"/>
        <dbReference type="ChEBI" id="CHEBI:15377"/>
        <dbReference type="ChEBI" id="CHEBI:16240"/>
        <dbReference type="ChEBI" id="CHEBI:17499"/>
        <dbReference type="EC" id="1.11.1.21"/>
    </reaction>
</comment>
<comment type="catalytic activity">
    <reaction evidence="1">
        <text>2 H2O2 = O2 + 2 H2O</text>
        <dbReference type="Rhea" id="RHEA:20309"/>
        <dbReference type="ChEBI" id="CHEBI:15377"/>
        <dbReference type="ChEBI" id="CHEBI:15379"/>
        <dbReference type="ChEBI" id="CHEBI:16240"/>
        <dbReference type="EC" id="1.11.1.21"/>
    </reaction>
</comment>
<comment type="cofactor">
    <cofactor evidence="1">
        <name>heme b</name>
        <dbReference type="ChEBI" id="CHEBI:60344"/>
    </cofactor>
    <text evidence="1">Binds 1 heme b (iron(II)-protoporphyrin IX) group per dimer.</text>
</comment>
<comment type="subunit">
    <text evidence="1">Homodimer or homotetramer.</text>
</comment>
<comment type="PTM">
    <text evidence="1">Formation of the three residue Trp-Tyr-Met cross-link is important for the catalase, but not the peroxidase activity of the enzyme.</text>
</comment>
<comment type="similarity">
    <text evidence="1">Belongs to the peroxidase family. Peroxidase/catalase subfamily.</text>
</comment>
<proteinExistence type="inferred from homology"/>
<organism>
    <name type="scientific">Geobacillus thermodenitrificans (strain NG80-2)</name>
    <dbReference type="NCBI Taxonomy" id="420246"/>
    <lineage>
        <taxon>Bacteria</taxon>
        <taxon>Bacillati</taxon>
        <taxon>Bacillota</taxon>
        <taxon>Bacilli</taxon>
        <taxon>Bacillales</taxon>
        <taxon>Anoxybacillaceae</taxon>
        <taxon>Geobacillus</taxon>
    </lineage>
</organism>
<evidence type="ECO:0000255" key="1">
    <source>
        <dbReference type="HAMAP-Rule" id="MF_01961"/>
    </source>
</evidence>
<evidence type="ECO:0000256" key="2">
    <source>
        <dbReference type="SAM" id="MobiDB-lite"/>
    </source>
</evidence>
<accession>A4INM5</accession>